<dbReference type="EC" id="1.1.1.86" evidence="1"/>
<dbReference type="EMBL" id="CP000878">
    <property type="protein sequence ID" value="ABX09294.1"/>
    <property type="molecule type" value="Genomic_DNA"/>
</dbReference>
<dbReference type="RefSeq" id="WP_012195915.1">
    <property type="nucleotide sequence ID" value="NC_009976.1"/>
</dbReference>
<dbReference type="SMR" id="A9BBT2"/>
<dbReference type="STRING" id="93059.P9211_13631"/>
<dbReference type="KEGG" id="pmj:P9211_13631"/>
<dbReference type="eggNOG" id="COG0059">
    <property type="taxonomic scope" value="Bacteria"/>
</dbReference>
<dbReference type="HOGENOM" id="CLU_033821_0_1_3"/>
<dbReference type="OrthoDB" id="9804088at2"/>
<dbReference type="UniPathway" id="UPA00047">
    <property type="reaction ID" value="UER00056"/>
</dbReference>
<dbReference type="UniPathway" id="UPA00049">
    <property type="reaction ID" value="UER00060"/>
</dbReference>
<dbReference type="Proteomes" id="UP000000788">
    <property type="component" value="Chromosome"/>
</dbReference>
<dbReference type="GO" id="GO:0005829">
    <property type="term" value="C:cytosol"/>
    <property type="evidence" value="ECO:0007669"/>
    <property type="project" value="TreeGrafter"/>
</dbReference>
<dbReference type="GO" id="GO:0004455">
    <property type="term" value="F:ketol-acid reductoisomerase activity"/>
    <property type="evidence" value="ECO:0007669"/>
    <property type="project" value="UniProtKB-UniRule"/>
</dbReference>
<dbReference type="GO" id="GO:0000287">
    <property type="term" value="F:magnesium ion binding"/>
    <property type="evidence" value="ECO:0007669"/>
    <property type="project" value="UniProtKB-UniRule"/>
</dbReference>
<dbReference type="GO" id="GO:0050661">
    <property type="term" value="F:NADP binding"/>
    <property type="evidence" value="ECO:0007669"/>
    <property type="project" value="InterPro"/>
</dbReference>
<dbReference type="GO" id="GO:0009097">
    <property type="term" value="P:isoleucine biosynthetic process"/>
    <property type="evidence" value="ECO:0007669"/>
    <property type="project" value="UniProtKB-UniRule"/>
</dbReference>
<dbReference type="GO" id="GO:0009099">
    <property type="term" value="P:L-valine biosynthetic process"/>
    <property type="evidence" value="ECO:0007669"/>
    <property type="project" value="UniProtKB-UniRule"/>
</dbReference>
<dbReference type="FunFam" id="3.40.50.720:FF:000023">
    <property type="entry name" value="Ketol-acid reductoisomerase (NADP(+))"/>
    <property type="match status" value="1"/>
</dbReference>
<dbReference type="Gene3D" id="6.10.240.10">
    <property type="match status" value="1"/>
</dbReference>
<dbReference type="Gene3D" id="3.40.50.720">
    <property type="entry name" value="NAD(P)-binding Rossmann-like Domain"/>
    <property type="match status" value="1"/>
</dbReference>
<dbReference type="HAMAP" id="MF_00435">
    <property type="entry name" value="IlvC"/>
    <property type="match status" value="1"/>
</dbReference>
<dbReference type="InterPro" id="IPR008927">
    <property type="entry name" value="6-PGluconate_DH-like_C_sf"/>
</dbReference>
<dbReference type="InterPro" id="IPR013023">
    <property type="entry name" value="KARI"/>
</dbReference>
<dbReference type="InterPro" id="IPR000506">
    <property type="entry name" value="KARI_C"/>
</dbReference>
<dbReference type="InterPro" id="IPR013116">
    <property type="entry name" value="KARI_N"/>
</dbReference>
<dbReference type="InterPro" id="IPR014359">
    <property type="entry name" value="KARI_prok"/>
</dbReference>
<dbReference type="InterPro" id="IPR036291">
    <property type="entry name" value="NAD(P)-bd_dom_sf"/>
</dbReference>
<dbReference type="NCBIfam" id="TIGR00465">
    <property type="entry name" value="ilvC"/>
    <property type="match status" value="1"/>
</dbReference>
<dbReference type="NCBIfam" id="NF004017">
    <property type="entry name" value="PRK05479.1"/>
    <property type="match status" value="1"/>
</dbReference>
<dbReference type="NCBIfam" id="NF009940">
    <property type="entry name" value="PRK13403.1"/>
    <property type="match status" value="1"/>
</dbReference>
<dbReference type="PANTHER" id="PTHR21371">
    <property type="entry name" value="KETOL-ACID REDUCTOISOMERASE, MITOCHONDRIAL"/>
    <property type="match status" value="1"/>
</dbReference>
<dbReference type="PANTHER" id="PTHR21371:SF1">
    <property type="entry name" value="KETOL-ACID REDUCTOISOMERASE, MITOCHONDRIAL"/>
    <property type="match status" value="1"/>
</dbReference>
<dbReference type="Pfam" id="PF01450">
    <property type="entry name" value="KARI_C"/>
    <property type="match status" value="1"/>
</dbReference>
<dbReference type="Pfam" id="PF07991">
    <property type="entry name" value="KARI_N"/>
    <property type="match status" value="1"/>
</dbReference>
<dbReference type="PIRSF" id="PIRSF000116">
    <property type="entry name" value="IlvC_gammaproteo"/>
    <property type="match status" value="1"/>
</dbReference>
<dbReference type="SUPFAM" id="SSF48179">
    <property type="entry name" value="6-phosphogluconate dehydrogenase C-terminal domain-like"/>
    <property type="match status" value="1"/>
</dbReference>
<dbReference type="SUPFAM" id="SSF51735">
    <property type="entry name" value="NAD(P)-binding Rossmann-fold domains"/>
    <property type="match status" value="1"/>
</dbReference>
<dbReference type="PROSITE" id="PS51851">
    <property type="entry name" value="KARI_C"/>
    <property type="match status" value="1"/>
</dbReference>
<dbReference type="PROSITE" id="PS51850">
    <property type="entry name" value="KARI_N"/>
    <property type="match status" value="1"/>
</dbReference>
<organism>
    <name type="scientific">Prochlorococcus marinus (strain MIT 9211)</name>
    <dbReference type="NCBI Taxonomy" id="93059"/>
    <lineage>
        <taxon>Bacteria</taxon>
        <taxon>Bacillati</taxon>
        <taxon>Cyanobacteriota</taxon>
        <taxon>Cyanophyceae</taxon>
        <taxon>Synechococcales</taxon>
        <taxon>Prochlorococcaceae</taxon>
        <taxon>Prochlorococcus</taxon>
    </lineage>
</organism>
<proteinExistence type="inferred from homology"/>
<protein>
    <recommendedName>
        <fullName evidence="1">Ketol-acid reductoisomerase (NADP(+))</fullName>
        <shortName evidence="1">KARI</shortName>
        <ecNumber evidence="1">1.1.1.86</ecNumber>
    </recommendedName>
    <alternativeName>
        <fullName evidence="1">Acetohydroxy-acid isomeroreductase</fullName>
        <shortName evidence="1">AHIR</shortName>
    </alternativeName>
    <alternativeName>
        <fullName evidence="1">Alpha-keto-beta-hydroxylacyl reductoisomerase</fullName>
    </alternativeName>
    <alternativeName>
        <fullName evidence="1">Ketol-acid reductoisomerase type 1</fullName>
    </alternativeName>
    <alternativeName>
        <fullName evidence="1">Ketol-acid reductoisomerase type I</fullName>
    </alternativeName>
</protein>
<evidence type="ECO:0000255" key="1">
    <source>
        <dbReference type="HAMAP-Rule" id="MF_00435"/>
    </source>
</evidence>
<evidence type="ECO:0000255" key="2">
    <source>
        <dbReference type="PROSITE-ProRule" id="PRU01197"/>
    </source>
</evidence>
<evidence type="ECO:0000255" key="3">
    <source>
        <dbReference type="PROSITE-ProRule" id="PRU01198"/>
    </source>
</evidence>
<reference key="1">
    <citation type="journal article" date="2007" name="PLoS Genet.">
        <title>Patterns and implications of gene gain and loss in the evolution of Prochlorococcus.</title>
        <authorList>
            <person name="Kettler G.C."/>
            <person name="Martiny A.C."/>
            <person name="Huang K."/>
            <person name="Zucker J."/>
            <person name="Coleman M.L."/>
            <person name="Rodrigue S."/>
            <person name="Chen F."/>
            <person name="Lapidus A."/>
            <person name="Ferriera S."/>
            <person name="Johnson J."/>
            <person name="Steglich C."/>
            <person name="Church G.M."/>
            <person name="Richardson P."/>
            <person name="Chisholm S.W."/>
        </authorList>
    </citation>
    <scope>NUCLEOTIDE SEQUENCE [LARGE SCALE GENOMIC DNA]</scope>
    <source>
        <strain>MIT 9211</strain>
    </source>
</reference>
<feature type="chain" id="PRO_1000124320" description="Ketol-acid reductoisomerase (NADP(+))">
    <location>
        <begin position="1"/>
        <end position="331"/>
    </location>
</feature>
<feature type="domain" description="KARI N-terminal Rossmann" evidence="2">
    <location>
        <begin position="2"/>
        <end position="182"/>
    </location>
</feature>
<feature type="domain" description="KARI C-terminal knotted" evidence="3">
    <location>
        <begin position="183"/>
        <end position="328"/>
    </location>
</feature>
<feature type="active site" evidence="1">
    <location>
        <position position="108"/>
    </location>
</feature>
<feature type="binding site" evidence="1">
    <location>
        <begin position="25"/>
        <end position="28"/>
    </location>
    <ligand>
        <name>NADP(+)</name>
        <dbReference type="ChEBI" id="CHEBI:58349"/>
    </ligand>
</feature>
<feature type="binding site" evidence="1">
    <location>
        <position position="51"/>
    </location>
    <ligand>
        <name>NADP(+)</name>
        <dbReference type="ChEBI" id="CHEBI:58349"/>
    </ligand>
</feature>
<feature type="binding site" evidence="1">
    <location>
        <position position="53"/>
    </location>
    <ligand>
        <name>NADP(+)</name>
        <dbReference type="ChEBI" id="CHEBI:58349"/>
    </ligand>
</feature>
<feature type="binding site" evidence="1">
    <location>
        <begin position="83"/>
        <end position="86"/>
    </location>
    <ligand>
        <name>NADP(+)</name>
        <dbReference type="ChEBI" id="CHEBI:58349"/>
    </ligand>
</feature>
<feature type="binding site" evidence="1">
    <location>
        <position position="134"/>
    </location>
    <ligand>
        <name>NADP(+)</name>
        <dbReference type="ChEBI" id="CHEBI:58349"/>
    </ligand>
</feature>
<feature type="binding site" evidence="1">
    <location>
        <position position="191"/>
    </location>
    <ligand>
        <name>Mg(2+)</name>
        <dbReference type="ChEBI" id="CHEBI:18420"/>
        <label>1</label>
    </ligand>
</feature>
<feature type="binding site" evidence="1">
    <location>
        <position position="191"/>
    </location>
    <ligand>
        <name>Mg(2+)</name>
        <dbReference type="ChEBI" id="CHEBI:18420"/>
        <label>2</label>
    </ligand>
</feature>
<feature type="binding site" evidence="1">
    <location>
        <position position="195"/>
    </location>
    <ligand>
        <name>Mg(2+)</name>
        <dbReference type="ChEBI" id="CHEBI:18420"/>
        <label>1</label>
    </ligand>
</feature>
<feature type="binding site" evidence="1">
    <location>
        <position position="227"/>
    </location>
    <ligand>
        <name>Mg(2+)</name>
        <dbReference type="ChEBI" id="CHEBI:18420"/>
        <label>2</label>
    </ligand>
</feature>
<feature type="binding site" evidence="1">
    <location>
        <position position="231"/>
    </location>
    <ligand>
        <name>Mg(2+)</name>
        <dbReference type="ChEBI" id="CHEBI:18420"/>
        <label>2</label>
    </ligand>
</feature>
<feature type="binding site" evidence="1">
    <location>
        <position position="252"/>
    </location>
    <ligand>
        <name>substrate</name>
    </ligand>
</feature>
<keyword id="KW-0028">Amino-acid biosynthesis</keyword>
<keyword id="KW-0100">Branched-chain amino acid biosynthesis</keyword>
<keyword id="KW-0460">Magnesium</keyword>
<keyword id="KW-0479">Metal-binding</keyword>
<keyword id="KW-0521">NADP</keyword>
<keyword id="KW-0560">Oxidoreductase</keyword>
<keyword id="KW-1185">Reference proteome</keyword>
<gene>
    <name evidence="1" type="primary">ilvC</name>
    <name type="ordered locus">P9211_13631</name>
</gene>
<comment type="function">
    <text evidence="1">Involved in the biosynthesis of branched-chain amino acids (BCAA). Catalyzes an alkyl-migration followed by a ketol-acid reduction of (S)-2-acetolactate (S2AL) to yield (R)-2,3-dihydroxy-isovalerate. In the isomerase reaction, S2AL is rearranged via a Mg-dependent methyl migration to produce 3-hydroxy-3-methyl-2-ketobutyrate (HMKB). In the reductase reaction, this 2-ketoacid undergoes a metal-dependent reduction by NADPH to yield (R)-2,3-dihydroxy-isovalerate.</text>
</comment>
<comment type="catalytic activity">
    <reaction evidence="1">
        <text>(2R)-2,3-dihydroxy-3-methylbutanoate + NADP(+) = (2S)-2-acetolactate + NADPH + H(+)</text>
        <dbReference type="Rhea" id="RHEA:22068"/>
        <dbReference type="ChEBI" id="CHEBI:15378"/>
        <dbReference type="ChEBI" id="CHEBI:49072"/>
        <dbReference type="ChEBI" id="CHEBI:57783"/>
        <dbReference type="ChEBI" id="CHEBI:58349"/>
        <dbReference type="ChEBI" id="CHEBI:58476"/>
        <dbReference type="EC" id="1.1.1.86"/>
    </reaction>
</comment>
<comment type="catalytic activity">
    <reaction evidence="1">
        <text>(2R,3R)-2,3-dihydroxy-3-methylpentanoate + NADP(+) = (S)-2-ethyl-2-hydroxy-3-oxobutanoate + NADPH + H(+)</text>
        <dbReference type="Rhea" id="RHEA:13493"/>
        <dbReference type="ChEBI" id="CHEBI:15378"/>
        <dbReference type="ChEBI" id="CHEBI:49256"/>
        <dbReference type="ChEBI" id="CHEBI:49258"/>
        <dbReference type="ChEBI" id="CHEBI:57783"/>
        <dbReference type="ChEBI" id="CHEBI:58349"/>
        <dbReference type="EC" id="1.1.1.86"/>
    </reaction>
</comment>
<comment type="cofactor">
    <cofactor evidence="1">
        <name>Mg(2+)</name>
        <dbReference type="ChEBI" id="CHEBI:18420"/>
    </cofactor>
    <text evidence="1">Binds 2 magnesium ions per subunit.</text>
</comment>
<comment type="pathway">
    <text evidence="1">Amino-acid biosynthesis; L-isoleucine biosynthesis; L-isoleucine from 2-oxobutanoate: step 2/4.</text>
</comment>
<comment type="pathway">
    <text evidence="1">Amino-acid biosynthesis; L-valine biosynthesis; L-valine from pyruvate: step 2/4.</text>
</comment>
<comment type="similarity">
    <text evidence="1">Belongs to the ketol-acid reductoisomerase family.</text>
</comment>
<sequence>MAQLFYDSDADLSLLSGKTVAIIGYGSQGHAHALNLKDSGINVVVGLYDGSRSASKAIADGLEVLSVGEASAKADWIMVLLPDEFQKDVYNKEISPHLQPGKVLSFAHGFNIRFELIKPPSFVDVVMIAPKGPGHTVRWEFQNGQGVPALFAIEQDASGKARDLAMAYAKGIGGTRAGILETNFKEETETDLFGEQAVLCGGLSALVKAGFETLVDAGYQPELAYFECLHEVKLIVDLMVKGGLTAMRDSISNTAEYGDYISGPRLITSETKAEMKRILSDIQDGTFARNFVAECEAGKPEMKRIRNEDAALPVEQVGKGLRAMFSWLKTD</sequence>
<name>ILVC_PROM4</name>
<accession>A9BBT2</accession>